<accession>B5DKM4</accession>
<protein>
    <recommendedName>
        <fullName>Ubiquitin-conjugating enzyme E2 S</fullName>
        <ecNumber>2.3.2.23</ecNumber>
    </recommendedName>
    <alternativeName>
        <fullName>E2 ubiquitin-conjugating enzyme S</fullName>
    </alternativeName>
    <alternativeName>
        <fullName>Ubiquitin carrier protein S</fullName>
    </alternativeName>
    <alternativeName>
        <fullName>Ubiquitin-protein ligase S</fullName>
    </alternativeName>
</protein>
<feature type="chain" id="PRO_0000390443" description="Ubiquitin-conjugating enzyme E2 S">
    <location>
        <begin position="1"/>
        <end position="209"/>
    </location>
</feature>
<feature type="domain" description="UBC core" evidence="1">
    <location>
        <begin position="14"/>
        <end position="160"/>
    </location>
</feature>
<feature type="region of interest" description="Disordered" evidence="3">
    <location>
        <begin position="165"/>
        <end position="194"/>
    </location>
</feature>
<feature type="compositionally biased region" description="Basic and acidic residues" evidence="3">
    <location>
        <begin position="171"/>
        <end position="194"/>
    </location>
</feature>
<feature type="active site" description="Glycyl thioester intermediate" evidence="1 2">
    <location>
        <position position="98"/>
    </location>
</feature>
<reference key="1">
    <citation type="journal article" date="2005" name="Genome Res.">
        <title>Comparative genome sequencing of Drosophila pseudoobscura: chromosomal, gene, and cis-element evolution.</title>
        <authorList>
            <person name="Richards S."/>
            <person name="Liu Y."/>
            <person name="Bettencourt B.R."/>
            <person name="Hradecky P."/>
            <person name="Letovsky S."/>
            <person name="Nielsen R."/>
            <person name="Thornton K."/>
            <person name="Hubisz M.J."/>
            <person name="Chen R."/>
            <person name="Meisel R.P."/>
            <person name="Couronne O."/>
            <person name="Hua S."/>
            <person name="Smith M.A."/>
            <person name="Zhang P."/>
            <person name="Liu J."/>
            <person name="Bussemaker H.J."/>
            <person name="van Batenburg M.F."/>
            <person name="Howells S.L."/>
            <person name="Scherer S.E."/>
            <person name="Sodergren E."/>
            <person name="Matthews B.B."/>
            <person name="Crosby M.A."/>
            <person name="Schroeder A.J."/>
            <person name="Ortiz-Barrientos D."/>
            <person name="Rives C.M."/>
            <person name="Metzker M.L."/>
            <person name="Muzny D.M."/>
            <person name="Scott G."/>
            <person name="Steffen D."/>
            <person name="Wheeler D.A."/>
            <person name="Worley K.C."/>
            <person name="Havlak P."/>
            <person name="Durbin K.J."/>
            <person name="Egan A."/>
            <person name="Gill R."/>
            <person name="Hume J."/>
            <person name="Morgan M.B."/>
            <person name="Miner G."/>
            <person name="Hamilton C."/>
            <person name="Huang Y."/>
            <person name="Waldron L."/>
            <person name="Verduzco D."/>
            <person name="Clerc-Blankenburg K.P."/>
            <person name="Dubchak I."/>
            <person name="Noor M.A.F."/>
            <person name="Anderson W."/>
            <person name="White K.P."/>
            <person name="Clark A.G."/>
            <person name="Schaeffer S.W."/>
            <person name="Gelbart W.M."/>
            <person name="Weinstock G.M."/>
            <person name="Gibbs R.A."/>
        </authorList>
    </citation>
    <scope>NUCLEOTIDE SEQUENCE [LARGE SCALE GENOMIC DNA]</scope>
    <source>
        <strain>MV2-25 / Tucson 14011-0121.94</strain>
    </source>
</reference>
<sequence length="209" mass="23399">MSSQYSNVENLSPQTIRQVMRELQEMETTPPEGIKVLINESDVTDIQALIDGPAGTPYAVGIFRVKLTLSKDFPQTPPKAYFLTKIFHPNVAGNGEICVNTLKKDWKPDLGIKHILLTIKCLLIVPNPESALNEEAGKMLLERYDDYSQRARMMTEIHAQPAKCGVGAASDAKDDDGPSTKKHAGLDKKLQDKKKEKLLKEKKRMLKRL</sequence>
<evidence type="ECO:0000255" key="1">
    <source>
        <dbReference type="PROSITE-ProRule" id="PRU00388"/>
    </source>
</evidence>
<evidence type="ECO:0000255" key="2">
    <source>
        <dbReference type="PROSITE-ProRule" id="PRU10133"/>
    </source>
</evidence>
<evidence type="ECO:0000256" key="3">
    <source>
        <dbReference type="SAM" id="MobiDB-lite"/>
    </source>
</evidence>
<name>UBE2S_DROPS</name>
<proteinExistence type="inferred from homology"/>
<organism>
    <name type="scientific">Drosophila pseudoobscura pseudoobscura</name>
    <name type="common">Fruit fly</name>
    <dbReference type="NCBI Taxonomy" id="46245"/>
    <lineage>
        <taxon>Eukaryota</taxon>
        <taxon>Metazoa</taxon>
        <taxon>Ecdysozoa</taxon>
        <taxon>Arthropoda</taxon>
        <taxon>Hexapoda</taxon>
        <taxon>Insecta</taxon>
        <taxon>Pterygota</taxon>
        <taxon>Neoptera</taxon>
        <taxon>Endopterygota</taxon>
        <taxon>Diptera</taxon>
        <taxon>Brachycera</taxon>
        <taxon>Muscomorpha</taxon>
        <taxon>Ephydroidea</taxon>
        <taxon>Drosophilidae</taxon>
        <taxon>Drosophila</taxon>
        <taxon>Sophophora</taxon>
    </lineage>
</organism>
<dbReference type="EC" id="2.3.2.23"/>
<dbReference type="EMBL" id="CH379063">
    <property type="protein sequence ID" value="EDY72074.1"/>
    <property type="molecule type" value="Genomic_DNA"/>
</dbReference>
<dbReference type="SMR" id="B5DKM4"/>
<dbReference type="FunCoup" id="B5DKM4">
    <property type="interactions" value="2013"/>
</dbReference>
<dbReference type="STRING" id="46245.B5DKM4"/>
<dbReference type="EnsemblMetazoa" id="FBtr0274626">
    <property type="protein sequence ID" value="FBpp0273064"/>
    <property type="gene ID" value="FBgn0244212"/>
</dbReference>
<dbReference type="KEGG" id="dpo:6901912"/>
<dbReference type="eggNOG" id="KOG0423">
    <property type="taxonomic scope" value="Eukaryota"/>
</dbReference>
<dbReference type="HOGENOM" id="CLU_030988_5_3_1"/>
<dbReference type="InParanoid" id="B5DKM4"/>
<dbReference type="OMA" id="QPAKCGA"/>
<dbReference type="UniPathway" id="UPA00143"/>
<dbReference type="Proteomes" id="UP000001819">
    <property type="component" value="Chromosome X"/>
</dbReference>
<dbReference type="Bgee" id="FBgn0244212">
    <property type="expression patterns" value="Expressed in female reproductive system and 2 other cell types or tissues"/>
</dbReference>
<dbReference type="GO" id="GO:0005524">
    <property type="term" value="F:ATP binding"/>
    <property type="evidence" value="ECO:0007669"/>
    <property type="project" value="UniProtKB-KW"/>
</dbReference>
<dbReference type="GO" id="GO:0061631">
    <property type="term" value="F:ubiquitin conjugating enzyme activity"/>
    <property type="evidence" value="ECO:0007669"/>
    <property type="project" value="UniProtKB-EC"/>
</dbReference>
<dbReference type="GO" id="GO:0031145">
    <property type="term" value="P:anaphase-promoting complex-dependent catabolic process"/>
    <property type="evidence" value="ECO:0000250"/>
    <property type="project" value="UniProtKB"/>
</dbReference>
<dbReference type="GO" id="GO:0051301">
    <property type="term" value="P:cell division"/>
    <property type="evidence" value="ECO:0007669"/>
    <property type="project" value="UniProtKB-KW"/>
</dbReference>
<dbReference type="GO" id="GO:0010458">
    <property type="term" value="P:exit from mitosis"/>
    <property type="evidence" value="ECO:0000250"/>
    <property type="project" value="UniProtKB"/>
</dbReference>
<dbReference type="GO" id="GO:0016567">
    <property type="term" value="P:protein ubiquitination"/>
    <property type="evidence" value="ECO:0007669"/>
    <property type="project" value="UniProtKB-UniPathway"/>
</dbReference>
<dbReference type="CDD" id="cd23804">
    <property type="entry name" value="UBCc_UBE2S"/>
    <property type="match status" value="1"/>
</dbReference>
<dbReference type="FunFam" id="3.10.110.10:FF:000034">
    <property type="entry name" value="Ubiquitin-conjugating enzyme E2 S"/>
    <property type="match status" value="1"/>
</dbReference>
<dbReference type="Gene3D" id="3.10.110.10">
    <property type="entry name" value="Ubiquitin Conjugating Enzyme"/>
    <property type="match status" value="1"/>
</dbReference>
<dbReference type="InterPro" id="IPR050113">
    <property type="entry name" value="Ub_conjugating_enzyme"/>
</dbReference>
<dbReference type="InterPro" id="IPR000608">
    <property type="entry name" value="UBQ-conjugat_E2_core"/>
</dbReference>
<dbReference type="InterPro" id="IPR023313">
    <property type="entry name" value="UBQ-conjugating_AS"/>
</dbReference>
<dbReference type="InterPro" id="IPR016135">
    <property type="entry name" value="UBQ-conjugating_enzyme/RWD"/>
</dbReference>
<dbReference type="PANTHER" id="PTHR24067">
    <property type="entry name" value="UBIQUITIN-CONJUGATING ENZYME E2"/>
    <property type="match status" value="1"/>
</dbReference>
<dbReference type="Pfam" id="PF00179">
    <property type="entry name" value="UQ_con"/>
    <property type="match status" value="1"/>
</dbReference>
<dbReference type="SMART" id="SM00212">
    <property type="entry name" value="UBCc"/>
    <property type="match status" value="1"/>
</dbReference>
<dbReference type="SUPFAM" id="SSF54495">
    <property type="entry name" value="UBC-like"/>
    <property type="match status" value="1"/>
</dbReference>
<dbReference type="PROSITE" id="PS00183">
    <property type="entry name" value="UBC_1"/>
    <property type="match status" value="1"/>
</dbReference>
<dbReference type="PROSITE" id="PS50127">
    <property type="entry name" value="UBC_2"/>
    <property type="match status" value="1"/>
</dbReference>
<keyword id="KW-0067">ATP-binding</keyword>
<keyword id="KW-0131">Cell cycle</keyword>
<keyword id="KW-0132">Cell division</keyword>
<keyword id="KW-0547">Nucleotide-binding</keyword>
<keyword id="KW-1185">Reference proteome</keyword>
<keyword id="KW-0808">Transferase</keyword>
<keyword id="KW-0833">Ubl conjugation pathway</keyword>
<gene>
    <name type="ORF">GA22810</name>
</gene>
<comment type="function">
    <text evidence="1">Catalyzes the covalent attachment of ubiquitin to other proteins. Acts as an essential factor of the anaphase promoting complex/cyclosome (APC/C), a cell cycle-regulated ubiquitin ligase that controls progression through mitosis. Acts by specifically elongating polyubiquitin chains initiated by the E2 enzyme vih/UbcH10 on APC/C substrates, enhancing the degradation of APC/C substrates by the proteasome and promoting mitotic exit.</text>
</comment>
<comment type="catalytic activity">
    <reaction evidence="1 2">
        <text>S-ubiquitinyl-[E1 ubiquitin-activating enzyme]-L-cysteine + [E2 ubiquitin-conjugating enzyme]-L-cysteine = [E1 ubiquitin-activating enzyme]-L-cysteine + S-ubiquitinyl-[E2 ubiquitin-conjugating enzyme]-L-cysteine.</text>
        <dbReference type="EC" id="2.3.2.23"/>
    </reaction>
</comment>
<comment type="pathway">
    <text evidence="1">Protein modification; protein ubiquitination.</text>
</comment>
<comment type="similarity">
    <text evidence="1">Belongs to the ubiquitin-conjugating enzyme family.</text>
</comment>